<dbReference type="EC" id="1.21.99.3" evidence="1"/>
<dbReference type="EMBL" id="DQ888896">
    <property type="protein sequence ID" value="ABK20156.1"/>
    <property type="molecule type" value="mRNA"/>
</dbReference>
<dbReference type="Ensembl" id="ENSSAUT00010063923.1">
    <property type="protein sequence ID" value="ENSSAUP00010060969.1"/>
    <property type="gene ID" value="ENSSAUG00010024659.1"/>
</dbReference>
<dbReference type="GeneTree" id="ENSGT00940000154482"/>
<dbReference type="InParanoid" id="A7YD35"/>
<dbReference type="OMA" id="CSXPPFM"/>
<dbReference type="Proteomes" id="UP000472265">
    <property type="component" value="Chromosome 22"/>
</dbReference>
<dbReference type="GO" id="GO:0010008">
    <property type="term" value="C:endosome membrane"/>
    <property type="evidence" value="ECO:0007669"/>
    <property type="project" value="UniProtKB-SubCell"/>
</dbReference>
<dbReference type="GO" id="GO:0005886">
    <property type="term" value="C:plasma membrane"/>
    <property type="evidence" value="ECO:0007669"/>
    <property type="project" value="UniProtKB-SubCell"/>
</dbReference>
<dbReference type="GO" id="GO:0004800">
    <property type="term" value="F:thyroxine 5'-deiodinase activity"/>
    <property type="evidence" value="ECO:0007669"/>
    <property type="project" value="InterPro"/>
</dbReference>
<dbReference type="GO" id="GO:0033798">
    <property type="term" value="F:thyroxine 5-deiodinase activity"/>
    <property type="evidence" value="ECO:0000250"/>
    <property type="project" value="UniProtKB"/>
</dbReference>
<dbReference type="GO" id="GO:0042446">
    <property type="term" value="P:hormone biosynthetic process"/>
    <property type="evidence" value="ECO:0007669"/>
    <property type="project" value="UniProtKB-KW"/>
</dbReference>
<dbReference type="GO" id="GO:0042404">
    <property type="term" value="P:thyroid hormone catabolic process"/>
    <property type="evidence" value="ECO:0000250"/>
    <property type="project" value="UniProtKB"/>
</dbReference>
<dbReference type="FunFam" id="3.40.30.10:FF:000239">
    <property type="entry name" value="Iodothyronine deiodinase"/>
    <property type="match status" value="1"/>
</dbReference>
<dbReference type="Gene3D" id="3.40.30.10">
    <property type="entry name" value="Glutaredoxin"/>
    <property type="match status" value="1"/>
</dbReference>
<dbReference type="InterPro" id="IPR000643">
    <property type="entry name" value="Iodothyronine_deiodinase"/>
</dbReference>
<dbReference type="InterPro" id="IPR008261">
    <property type="entry name" value="Iodothyronine_deiodinase_AS"/>
</dbReference>
<dbReference type="InterPro" id="IPR027252">
    <property type="entry name" value="Iodothyronine_deiodinase_I/III"/>
</dbReference>
<dbReference type="PANTHER" id="PTHR11781">
    <property type="entry name" value="IODOTHYRONINE DEIODINASE"/>
    <property type="match status" value="1"/>
</dbReference>
<dbReference type="PANTHER" id="PTHR11781:SF4">
    <property type="entry name" value="THYROXINE 5-DEIODINASE"/>
    <property type="match status" value="1"/>
</dbReference>
<dbReference type="Pfam" id="PF00837">
    <property type="entry name" value="T4_deiodinase"/>
    <property type="match status" value="1"/>
</dbReference>
<dbReference type="PIRSF" id="PIRSF001330">
    <property type="entry name" value="IOD"/>
    <property type="match status" value="1"/>
</dbReference>
<dbReference type="PIRSF" id="PIRSF500144">
    <property type="entry name" value="IODI_III"/>
    <property type="match status" value="1"/>
</dbReference>
<dbReference type="PROSITE" id="PS01205">
    <property type="entry name" value="T4_DEIODINASE"/>
    <property type="match status" value="1"/>
</dbReference>
<protein>
    <recommendedName>
        <fullName>Thyroxine 5-deiodinase</fullName>
        <ecNumber evidence="1">1.21.99.3</ecNumber>
    </recommendedName>
    <alternativeName>
        <fullName>5DIII</fullName>
    </alternativeName>
    <alternativeName>
        <fullName>DIOIII</fullName>
    </alternativeName>
    <alternativeName>
        <fullName>Type 3 DI</fullName>
    </alternativeName>
    <alternativeName>
        <fullName>Type III iodothyronine deiodinase</fullName>
    </alternativeName>
</protein>
<organism>
    <name type="scientific">Sparus aurata</name>
    <name type="common">Gilthead sea bream</name>
    <dbReference type="NCBI Taxonomy" id="8175"/>
    <lineage>
        <taxon>Eukaryota</taxon>
        <taxon>Metazoa</taxon>
        <taxon>Chordata</taxon>
        <taxon>Craniata</taxon>
        <taxon>Vertebrata</taxon>
        <taxon>Euteleostomi</taxon>
        <taxon>Actinopterygii</taxon>
        <taxon>Neopterygii</taxon>
        <taxon>Teleostei</taxon>
        <taxon>Neoteleostei</taxon>
        <taxon>Acanthomorphata</taxon>
        <taxon>Eupercaria</taxon>
        <taxon>Spariformes</taxon>
        <taxon>Sparidae</taxon>
        <taxon>Sparus</taxon>
    </lineage>
</organism>
<comment type="function">
    <text evidence="1">Plays a crucial role in the metabolism of thyroid hormones (TH) and has specific roles in TH activation and inactivation by deiodination (By similarity). Catalyzes the deiodination of L-thyroxine (T4) to 3,3',5'-triiodothyronine (rT3), 3,5,3'-triiodothyronine (T3) to 3,3'-diiodothyronine (3,3'-T2), 3,5-diiodothyronine (3,5-T2) to 3-monoiodothyronine (3-T1), rT3 to 3',5'-diiodothyronine (3',5'-T2) and 3,3'-T2 to 3'-monoiodothyronine (3'-T1) via inner-ring deiodination (IRD) (By similarity). Catalyzes the deiodination of 3-T1 to L-thyronine (T0) via outer-ring deiodination (ORD) (By similarity). Catalyzes the tyrosyl ring deiodinations of 3,3',5,5'-tetraiodothyronamine, 3,3',5'-triiodothyronamine, 3,5,3'-triiodothyronamine, 3,5-diiodothyronamine, 3,3'-diiodothyronamine and 3-iodothyronamine (By similarity).</text>
</comment>
<comment type="catalytic activity">
    <reaction evidence="1">
        <text>3,3',5'-triiodo-L-thyronine + iodide + A + H(+) = L-thyroxine + AH2</text>
        <dbReference type="Rhea" id="RHEA:18897"/>
        <dbReference type="ChEBI" id="CHEBI:13193"/>
        <dbReference type="ChEBI" id="CHEBI:15378"/>
        <dbReference type="ChEBI" id="CHEBI:16382"/>
        <dbReference type="ChEBI" id="CHEBI:17499"/>
        <dbReference type="ChEBI" id="CHEBI:57261"/>
        <dbReference type="ChEBI" id="CHEBI:58448"/>
        <dbReference type="EC" id="1.21.99.3"/>
    </reaction>
    <physiologicalReaction direction="right-to-left" evidence="1">
        <dbReference type="Rhea" id="RHEA:18899"/>
    </physiologicalReaction>
</comment>
<comment type="catalytic activity">
    <reaction evidence="1">
        <text>3,3'-diiodo-L-thyronine + iodide + A + H(+) = 3,3',5-triiodo-L-thyronine + AH2</text>
        <dbReference type="Rhea" id="RHEA:82571"/>
        <dbReference type="ChEBI" id="CHEBI:13193"/>
        <dbReference type="ChEBI" id="CHEBI:15378"/>
        <dbReference type="ChEBI" id="CHEBI:16382"/>
        <dbReference type="ChEBI" id="CHEBI:17499"/>
        <dbReference type="ChEBI" id="CHEBI:176514"/>
        <dbReference type="ChEBI" id="CHEBI:533015"/>
    </reaction>
    <physiologicalReaction direction="right-to-left" evidence="1">
        <dbReference type="Rhea" id="RHEA:82573"/>
    </physiologicalReaction>
</comment>
<comment type="catalytic activity">
    <reaction evidence="1">
        <text>3-iodo-L-thyronine + iodide + A + H(+) = 3,5-diiodo-L-thyronine + AH2</text>
        <dbReference type="Rhea" id="RHEA:82895"/>
        <dbReference type="ChEBI" id="CHEBI:13193"/>
        <dbReference type="ChEBI" id="CHEBI:15378"/>
        <dbReference type="ChEBI" id="CHEBI:16382"/>
        <dbReference type="ChEBI" id="CHEBI:17499"/>
        <dbReference type="ChEBI" id="CHEBI:232626"/>
        <dbReference type="ChEBI" id="CHEBI:232627"/>
    </reaction>
    <physiologicalReaction direction="right-to-left" evidence="1">
        <dbReference type="Rhea" id="RHEA:82897"/>
    </physiologicalReaction>
</comment>
<comment type="catalytic activity">
    <reaction evidence="1">
        <text>L-thyronine + iodide + A + H(+) = 3-iodo-L-thyronine + AH2</text>
        <dbReference type="Rhea" id="RHEA:83771"/>
        <dbReference type="ChEBI" id="CHEBI:13193"/>
        <dbReference type="ChEBI" id="CHEBI:15378"/>
        <dbReference type="ChEBI" id="CHEBI:16382"/>
        <dbReference type="ChEBI" id="CHEBI:17499"/>
        <dbReference type="ChEBI" id="CHEBI:232627"/>
        <dbReference type="ChEBI" id="CHEBI:233333"/>
    </reaction>
    <physiologicalReaction direction="right-to-left" evidence="1">
        <dbReference type="Rhea" id="RHEA:83773"/>
    </physiologicalReaction>
</comment>
<comment type="catalytic activity">
    <reaction evidence="1">
        <text>3',5'-diiodo-L-thyronine + iodide + A + H(+) = 3,3',5'-triiodo-L-thyronine + AH2</text>
        <dbReference type="Rhea" id="RHEA:83775"/>
        <dbReference type="ChEBI" id="CHEBI:13193"/>
        <dbReference type="ChEBI" id="CHEBI:15378"/>
        <dbReference type="ChEBI" id="CHEBI:16382"/>
        <dbReference type="ChEBI" id="CHEBI:17499"/>
        <dbReference type="ChEBI" id="CHEBI:57261"/>
        <dbReference type="ChEBI" id="CHEBI:195762"/>
    </reaction>
    <physiologicalReaction direction="right-to-left" evidence="1">
        <dbReference type="Rhea" id="RHEA:83777"/>
    </physiologicalReaction>
</comment>
<comment type="catalytic activity">
    <reaction evidence="1">
        <text>3'-iodo-L-thyronine + iodide + A + H(+) = 3,3'-diiodo-L-thyronine + AH2</text>
        <dbReference type="Rhea" id="RHEA:83779"/>
        <dbReference type="ChEBI" id="CHEBI:13193"/>
        <dbReference type="ChEBI" id="CHEBI:15378"/>
        <dbReference type="ChEBI" id="CHEBI:16382"/>
        <dbReference type="ChEBI" id="CHEBI:17499"/>
        <dbReference type="ChEBI" id="CHEBI:176514"/>
        <dbReference type="ChEBI" id="CHEBI:232695"/>
    </reaction>
    <physiologicalReaction direction="right-to-left" evidence="1">
        <dbReference type="Rhea" id="RHEA:83781"/>
    </physiologicalReaction>
</comment>
<comment type="catalytic activity">
    <reaction evidence="1">
        <text>3,3',5'-triiodothyronamine + iodide + A + H(+) = 3,3',5,5'-tetraiodothyronamine + AH2</text>
        <dbReference type="Rhea" id="RHEA:83807"/>
        <dbReference type="ChEBI" id="CHEBI:13193"/>
        <dbReference type="ChEBI" id="CHEBI:15378"/>
        <dbReference type="ChEBI" id="CHEBI:16382"/>
        <dbReference type="ChEBI" id="CHEBI:17499"/>
        <dbReference type="ChEBI" id="CHEBI:233343"/>
        <dbReference type="ChEBI" id="CHEBI:233344"/>
    </reaction>
    <physiologicalReaction direction="right-to-left" evidence="1">
        <dbReference type="Rhea" id="RHEA:83809"/>
    </physiologicalReaction>
</comment>
<comment type="catalytic activity">
    <reaction evidence="1">
        <text>3',5'-diiodothyronamine + iodide + A + H(+) = 3,3',5'-triiodothyronamine + AH2</text>
        <dbReference type="Rhea" id="RHEA:83799"/>
        <dbReference type="ChEBI" id="CHEBI:13193"/>
        <dbReference type="ChEBI" id="CHEBI:15378"/>
        <dbReference type="ChEBI" id="CHEBI:16382"/>
        <dbReference type="ChEBI" id="CHEBI:17499"/>
        <dbReference type="ChEBI" id="CHEBI:233342"/>
        <dbReference type="ChEBI" id="CHEBI:233343"/>
    </reaction>
    <physiologicalReaction direction="right-to-left" evidence="1">
        <dbReference type="Rhea" id="RHEA:83801"/>
    </physiologicalReaction>
</comment>
<comment type="catalytic activity">
    <reaction evidence="1">
        <text>3,3'-diiodothyronamine + iodide + A + H(+) = 3,3',5-triiodothyronamine + AH2</text>
        <dbReference type="Rhea" id="RHEA:83811"/>
        <dbReference type="ChEBI" id="CHEBI:13193"/>
        <dbReference type="ChEBI" id="CHEBI:15378"/>
        <dbReference type="ChEBI" id="CHEBI:16382"/>
        <dbReference type="ChEBI" id="CHEBI:17499"/>
        <dbReference type="ChEBI" id="CHEBI:233341"/>
        <dbReference type="ChEBI" id="CHEBI:233426"/>
    </reaction>
    <physiologicalReaction direction="right-to-left" evidence="1">
        <dbReference type="Rhea" id="RHEA:83813"/>
    </physiologicalReaction>
</comment>
<comment type="catalytic activity">
    <reaction evidence="1">
        <text>3-iodothyronamine + iodide + A + H(+) = 3,5-diiodothyronamine + AH2</text>
        <dbReference type="Rhea" id="RHEA:83823"/>
        <dbReference type="ChEBI" id="CHEBI:13193"/>
        <dbReference type="ChEBI" id="CHEBI:15378"/>
        <dbReference type="ChEBI" id="CHEBI:16382"/>
        <dbReference type="ChEBI" id="CHEBI:17499"/>
        <dbReference type="ChEBI" id="CHEBI:231647"/>
        <dbReference type="ChEBI" id="CHEBI:233340"/>
    </reaction>
    <physiologicalReaction direction="right-to-left" evidence="1">
        <dbReference type="Rhea" id="RHEA:83825"/>
    </physiologicalReaction>
</comment>
<comment type="catalytic activity">
    <reaction evidence="1">
        <text>3'-iodothyronamine + iodide + A + H(+) = 3,3'-diiodothyronamine + AH2</text>
        <dbReference type="Rhea" id="RHEA:83815"/>
        <dbReference type="ChEBI" id="CHEBI:13193"/>
        <dbReference type="ChEBI" id="CHEBI:15378"/>
        <dbReference type="ChEBI" id="CHEBI:16382"/>
        <dbReference type="ChEBI" id="CHEBI:17499"/>
        <dbReference type="ChEBI" id="CHEBI:233339"/>
        <dbReference type="ChEBI" id="CHEBI:233341"/>
    </reaction>
    <physiologicalReaction direction="right-to-left" evidence="1">
        <dbReference type="Rhea" id="RHEA:83817"/>
    </physiologicalReaction>
</comment>
<comment type="catalytic activity">
    <reaction evidence="1">
        <text>thyronamine + iodide + A + H(+) = 3-iodothyronamine + AH2</text>
        <dbReference type="Rhea" id="RHEA:83819"/>
        <dbReference type="ChEBI" id="CHEBI:13193"/>
        <dbReference type="ChEBI" id="CHEBI:15378"/>
        <dbReference type="ChEBI" id="CHEBI:16382"/>
        <dbReference type="ChEBI" id="CHEBI:17499"/>
        <dbReference type="ChEBI" id="CHEBI:231647"/>
        <dbReference type="ChEBI" id="CHEBI:233334"/>
    </reaction>
    <physiologicalReaction direction="right-to-left" evidence="1">
        <dbReference type="Rhea" id="RHEA:83821"/>
    </physiologicalReaction>
</comment>
<comment type="subunit">
    <text evidence="1">Monomer. Homodimer. May undergo minor heretodimerization with DIO1 and DIO2 (By similarity).</text>
</comment>
<comment type="subcellular location">
    <subcellularLocation>
        <location evidence="1">Cell membrane</location>
        <topology evidence="2">Single-pass type II membrane protein</topology>
    </subcellularLocation>
    <subcellularLocation>
        <location evidence="1">Endosome membrane</location>
        <topology evidence="2">Single-pass type II membrane protein</topology>
    </subcellularLocation>
</comment>
<comment type="similarity">
    <text evidence="3">Belongs to the iodothyronine deiodinase family.</text>
</comment>
<feature type="chain" id="PRO_0000318644" description="Thyroxine 5-deiodinase">
    <location>
        <begin position="1"/>
        <end position="267"/>
    </location>
</feature>
<feature type="topological domain" description="Cytoplasmic" evidence="2">
    <location>
        <begin position="1"/>
        <end position="15"/>
    </location>
</feature>
<feature type="transmembrane region" description="Helical; Signal-anchor for type II membrane protein" evidence="2">
    <location>
        <begin position="16"/>
        <end position="36"/>
    </location>
</feature>
<feature type="topological domain" description="Extracellular" evidence="2">
    <location>
        <begin position="37"/>
        <end position="267"/>
    </location>
</feature>
<feature type="active site" evidence="1">
    <location>
        <position position="131"/>
    </location>
</feature>
<feature type="non-standard amino acid" description="Selenocysteine" evidence="1">
    <location>
        <position position="131"/>
    </location>
</feature>
<sequence>MHDSGGVQMARALKHAALCLMLLPRFLLAAVMLWLLDFLCIRKKVLLKMGERQDGPDDPPVCVSDSNKMFTLESLRAVWYGQKLDFLKSAHLGRTAPNTEVMLVQERRQVRILDCMKGKRPLILNFGSCSUPPFMTRLAAFQRVVSQYADIADFLVVYIEEAHPSDGWVSSDAPYQIPKHRCLEDRLRAAQLMLAEVPGSNVVVDNMDNSSNAAYGAYFERLYIVRDERVVYQGGRGPEGYRISELRNWLEQYRNGLVNSQTAVLHV</sequence>
<proteinExistence type="evidence at transcript level"/>
<name>IOD3_SPAAU</name>
<keyword id="KW-1003">Cell membrane</keyword>
<keyword id="KW-0967">Endosome</keyword>
<keyword id="KW-0472">Membrane</keyword>
<keyword id="KW-0560">Oxidoreductase</keyword>
<keyword id="KW-1185">Reference proteome</keyword>
<keyword id="KW-0712">Selenocysteine</keyword>
<keyword id="KW-0735">Signal-anchor</keyword>
<keyword id="KW-0893">Thyroid hormones biosynthesis</keyword>
<keyword id="KW-0812">Transmembrane</keyword>
<keyword id="KW-1133">Transmembrane helix</keyword>
<gene>
    <name type="primary">dio3</name>
</gene>
<reference key="1">
    <citation type="submission" date="2006-08" db="EMBL/GenBank/DDBJ databases">
        <title>Deiodinase expression during sea bream development.</title>
        <authorList>
            <person name="Campinho M.A."/>
            <person name="Power D.M."/>
            <person name="Sweeney G.E."/>
        </authorList>
    </citation>
    <scope>NUCLEOTIDE SEQUENCE [MRNA]</scope>
</reference>
<evidence type="ECO:0000250" key="1">
    <source>
        <dbReference type="UniProtKB" id="P55073"/>
    </source>
</evidence>
<evidence type="ECO:0000255" key="2"/>
<evidence type="ECO:0000305" key="3"/>
<accession>A7YD35</accession>